<accession>A4WPR4</accession>
<reference key="1">
    <citation type="submission" date="2007-04" db="EMBL/GenBank/DDBJ databases">
        <title>Complete sequence of chromosome of Rhodobacter sphaeroides ATCC 17025.</title>
        <authorList>
            <consortium name="US DOE Joint Genome Institute"/>
            <person name="Copeland A."/>
            <person name="Lucas S."/>
            <person name="Lapidus A."/>
            <person name="Barry K."/>
            <person name="Detter J.C."/>
            <person name="Glavina del Rio T."/>
            <person name="Hammon N."/>
            <person name="Israni S."/>
            <person name="Dalin E."/>
            <person name="Tice H."/>
            <person name="Pitluck S."/>
            <person name="Chertkov O."/>
            <person name="Brettin T."/>
            <person name="Bruce D."/>
            <person name="Han C."/>
            <person name="Schmutz J."/>
            <person name="Larimer F."/>
            <person name="Land M."/>
            <person name="Hauser L."/>
            <person name="Kyrpides N."/>
            <person name="Kim E."/>
            <person name="Richardson P."/>
            <person name="Mackenzie C."/>
            <person name="Choudhary M."/>
            <person name="Donohue T.J."/>
            <person name="Kaplan S."/>
        </authorList>
    </citation>
    <scope>NUCLEOTIDE SEQUENCE [LARGE SCALE GENOMIC DNA]</scope>
    <source>
        <strain>ATCC 17025 / ATH 2.4.3</strain>
    </source>
</reference>
<dbReference type="EMBL" id="CP000661">
    <property type="protein sequence ID" value="ABP69378.1"/>
    <property type="molecule type" value="Genomic_DNA"/>
</dbReference>
<dbReference type="SMR" id="A4WPR4"/>
<dbReference type="STRING" id="349102.Rsph17025_0472"/>
<dbReference type="KEGG" id="rsq:Rsph17025_0472"/>
<dbReference type="eggNOG" id="COG0792">
    <property type="taxonomic scope" value="Bacteria"/>
</dbReference>
<dbReference type="HOGENOM" id="CLU_115353_0_1_5"/>
<dbReference type="BioCyc" id="RSPH349102:G1G8M-485-MONOMER"/>
<dbReference type="GO" id="GO:0003676">
    <property type="term" value="F:nucleic acid binding"/>
    <property type="evidence" value="ECO:0007669"/>
    <property type="project" value="InterPro"/>
</dbReference>
<dbReference type="Gene3D" id="3.40.1350.10">
    <property type="match status" value="1"/>
</dbReference>
<dbReference type="HAMAP" id="MF_00048">
    <property type="entry name" value="UPF0102"/>
    <property type="match status" value="1"/>
</dbReference>
<dbReference type="InterPro" id="IPR011335">
    <property type="entry name" value="Restrct_endonuc-II-like"/>
</dbReference>
<dbReference type="InterPro" id="IPR011856">
    <property type="entry name" value="tRNA_endonuc-like_dom_sf"/>
</dbReference>
<dbReference type="InterPro" id="IPR003509">
    <property type="entry name" value="UPF0102_YraN-like"/>
</dbReference>
<dbReference type="NCBIfam" id="NF011269">
    <property type="entry name" value="PRK14676.1"/>
    <property type="match status" value="1"/>
</dbReference>
<dbReference type="PANTHER" id="PTHR34039">
    <property type="entry name" value="UPF0102 PROTEIN YRAN"/>
    <property type="match status" value="1"/>
</dbReference>
<dbReference type="PANTHER" id="PTHR34039:SF1">
    <property type="entry name" value="UPF0102 PROTEIN YRAN"/>
    <property type="match status" value="1"/>
</dbReference>
<dbReference type="Pfam" id="PF02021">
    <property type="entry name" value="UPF0102"/>
    <property type="match status" value="1"/>
</dbReference>
<dbReference type="SUPFAM" id="SSF52980">
    <property type="entry name" value="Restriction endonuclease-like"/>
    <property type="match status" value="1"/>
</dbReference>
<feature type="chain" id="PRO_0000336246" description="UPF0102 protein Rsph17025_0472">
    <location>
        <begin position="1"/>
        <end position="117"/>
    </location>
</feature>
<evidence type="ECO:0000255" key="1">
    <source>
        <dbReference type="HAMAP-Rule" id="MF_00048"/>
    </source>
</evidence>
<sequence length="117" mass="12702">MSGEVSHRAGFVAEEAVARIYERADRPVTARRWRGAAGEIDLIARDGAEVIFIEVKKSKSHAAAAARLSRRQMERIYGAASEFLAGEPLGQLTASRFDVALVDGMGRIEIIENAFAA</sequence>
<comment type="similarity">
    <text evidence="1">Belongs to the UPF0102 family.</text>
</comment>
<organism>
    <name type="scientific">Cereibacter sphaeroides (strain ATCC 17025 / ATH 2.4.3)</name>
    <name type="common">Rhodobacter sphaeroides</name>
    <dbReference type="NCBI Taxonomy" id="349102"/>
    <lineage>
        <taxon>Bacteria</taxon>
        <taxon>Pseudomonadati</taxon>
        <taxon>Pseudomonadota</taxon>
        <taxon>Alphaproteobacteria</taxon>
        <taxon>Rhodobacterales</taxon>
        <taxon>Paracoccaceae</taxon>
        <taxon>Cereibacter</taxon>
    </lineage>
</organism>
<name>Y472_CERS5</name>
<gene>
    <name type="ordered locus">Rsph17025_0472</name>
</gene>
<protein>
    <recommendedName>
        <fullName evidence="1">UPF0102 protein Rsph17025_0472</fullName>
    </recommendedName>
</protein>
<proteinExistence type="inferred from homology"/>